<reference key="1">
    <citation type="submission" date="2005-08" db="EMBL/GenBank/DDBJ databases">
        <title>Complete sequence of Pelodictyon luteolum DSM 273.</title>
        <authorList>
            <consortium name="US DOE Joint Genome Institute"/>
            <person name="Copeland A."/>
            <person name="Lucas S."/>
            <person name="Lapidus A."/>
            <person name="Barry K."/>
            <person name="Detter J.C."/>
            <person name="Glavina T."/>
            <person name="Hammon N."/>
            <person name="Israni S."/>
            <person name="Pitluck S."/>
            <person name="Bryant D."/>
            <person name="Schmutz J."/>
            <person name="Larimer F."/>
            <person name="Land M."/>
            <person name="Kyrpides N."/>
            <person name="Ivanova N."/>
            <person name="Richardson P."/>
        </authorList>
    </citation>
    <scope>NUCLEOTIDE SEQUENCE [LARGE SCALE GENOMIC DNA]</scope>
    <source>
        <strain>DSM 273 / BCRC 81028 / 2530</strain>
    </source>
</reference>
<feature type="chain" id="PRO_0000387025" description="Ribosomal RNA small subunit methyltransferase H">
    <location>
        <begin position="1"/>
        <end position="327"/>
    </location>
</feature>
<feature type="binding site" evidence="1">
    <location>
        <begin position="36"/>
        <end position="38"/>
    </location>
    <ligand>
        <name>S-adenosyl-L-methionine</name>
        <dbReference type="ChEBI" id="CHEBI:59789"/>
    </ligand>
</feature>
<feature type="binding site" evidence="1">
    <location>
        <position position="61"/>
    </location>
    <ligand>
        <name>S-adenosyl-L-methionine</name>
        <dbReference type="ChEBI" id="CHEBI:59789"/>
    </ligand>
</feature>
<feature type="binding site" evidence="1">
    <location>
        <position position="88"/>
    </location>
    <ligand>
        <name>S-adenosyl-L-methionine</name>
        <dbReference type="ChEBI" id="CHEBI:59789"/>
    </ligand>
</feature>
<feature type="binding site" evidence="1">
    <location>
        <position position="114"/>
    </location>
    <ligand>
        <name>S-adenosyl-L-methionine</name>
        <dbReference type="ChEBI" id="CHEBI:59789"/>
    </ligand>
</feature>
<feature type="binding site" evidence="1">
    <location>
        <position position="121"/>
    </location>
    <ligand>
        <name>S-adenosyl-L-methionine</name>
        <dbReference type="ChEBI" id="CHEBI:59789"/>
    </ligand>
</feature>
<name>RSMH_CHLL3</name>
<gene>
    <name evidence="1" type="primary">rsmH</name>
    <name type="synonym">mraW</name>
    <name type="ordered locus">Plut_2118</name>
</gene>
<comment type="function">
    <text evidence="1">Specifically methylates the N4 position of cytidine in position 1402 (C1402) of 16S rRNA.</text>
</comment>
<comment type="catalytic activity">
    <reaction evidence="1">
        <text>cytidine(1402) in 16S rRNA + S-adenosyl-L-methionine = N(4)-methylcytidine(1402) in 16S rRNA + S-adenosyl-L-homocysteine + H(+)</text>
        <dbReference type="Rhea" id="RHEA:42928"/>
        <dbReference type="Rhea" id="RHEA-COMP:10286"/>
        <dbReference type="Rhea" id="RHEA-COMP:10287"/>
        <dbReference type="ChEBI" id="CHEBI:15378"/>
        <dbReference type="ChEBI" id="CHEBI:57856"/>
        <dbReference type="ChEBI" id="CHEBI:59789"/>
        <dbReference type="ChEBI" id="CHEBI:74506"/>
        <dbReference type="ChEBI" id="CHEBI:82748"/>
        <dbReference type="EC" id="2.1.1.199"/>
    </reaction>
</comment>
<comment type="subcellular location">
    <subcellularLocation>
        <location evidence="1">Cytoplasm</location>
    </subcellularLocation>
</comment>
<comment type="similarity">
    <text evidence="1">Belongs to the methyltransferase superfamily. RsmH family.</text>
</comment>
<keyword id="KW-0963">Cytoplasm</keyword>
<keyword id="KW-0489">Methyltransferase</keyword>
<keyword id="KW-1185">Reference proteome</keyword>
<keyword id="KW-0698">rRNA processing</keyword>
<keyword id="KW-0949">S-adenosyl-L-methionine</keyword>
<keyword id="KW-0808">Transferase</keyword>
<sequence length="327" mass="35542">MPRSPDSYHDPVLLHECVDALVRGPGLYVDGTLGGGGHSMAILRALESGGWLEGSLLVGIDQDDEALHEAGSRLAAYPGRAVAVKGNFQDIARLASREAVQKGLEPRARAILLDLGVSSRQIDRAERGFSYMRTGPLDMRMDSSASTTAADILNDADERELAAIFFRYGEEPRSRAIARAVIAARMKHGPLSSTEDLADIVRSVVHGRQPSIRSLSRVFQALRIAVNRELDVLQRVLEDGVSVLDEGGRIAVISYHSLEDRMVKQYFAAQSKCDWGPKGVGLREPLSRGTLVPVTRKAVVASEDEVRVNPRSRSAKLRVAEKTGGVQ</sequence>
<evidence type="ECO:0000255" key="1">
    <source>
        <dbReference type="HAMAP-Rule" id="MF_01007"/>
    </source>
</evidence>
<organism>
    <name type="scientific">Chlorobium luteolum (strain DSM 273 / BCRC 81028 / 2530)</name>
    <name type="common">Pelodictyon luteolum</name>
    <dbReference type="NCBI Taxonomy" id="319225"/>
    <lineage>
        <taxon>Bacteria</taxon>
        <taxon>Pseudomonadati</taxon>
        <taxon>Chlorobiota</taxon>
        <taxon>Chlorobiia</taxon>
        <taxon>Chlorobiales</taxon>
        <taxon>Chlorobiaceae</taxon>
        <taxon>Chlorobium/Pelodictyon group</taxon>
        <taxon>Pelodictyon</taxon>
    </lineage>
</organism>
<proteinExistence type="inferred from homology"/>
<accession>Q3B121</accession>
<dbReference type="EC" id="2.1.1.199" evidence="1"/>
<dbReference type="EMBL" id="CP000096">
    <property type="protein sequence ID" value="ABB24960.1"/>
    <property type="molecule type" value="Genomic_DNA"/>
</dbReference>
<dbReference type="RefSeq" id="WP_011358830.1">
    <property type="nucleotide sequence ID" value="NC_007512.1"/>
</dbReference>
<dbReference type="SMR" id="Q3B121"/>
<dbReference type="STRING" id="319225.Plut_2118"/>
<dbReference type="KEGG" id="plt:Plut_2118"/>
<dbReference type="eggNOG" id="COG0275">
    <property type="taxonomic scope" value="Bacteria"/>
</dbReference>
<dbReference type="HOGENOM" id="CLU_038422_3_0_10"/>
<dbReference type="OrthoDB" id="9806637at2"/>
<dbReference type="Proteomes" id="UP000002709">
    <property type="component" value="Chromosome"/>
</dbReference>
<dbReference type="GO" id="GO:0005737">
    <property type="term" value="C:cytoplasm"/>
    <property type="evidence" value="ECO:0007669"/>
    <property type="project" value="UniProtKB-SubCell"/>
</dbReference>
<dbReference type="GO" id="GO:0071424">
    <property type="term" value="F:rRNA (cytosine-N4-)-methyltransferase activity"/>
    <property type="evidence" value="ECO:0007669"/>
    <property type="project" value="UniProtKB-UniRule"/>
</dbReference>
<dbReference type="GO" id="GO:0070475">
    <property type="term" value="P:rRNA base methylation"/>
    <property type="evidence" value="ECO:0007669"/>
    <property type="project" value="UniProtKB-UniRule"/>
</dbReference>
<dbReference type="Gene3D" id="1.10.150.170">
    <property type="entry name" value="Putative methyltransferase TM0872, insert domain"/>
    <property type="match status" value="1"/>
</dbReference>
<dbReference type="Gene3D" id="3.40.50.150">
    <property type="entry name" value="Vaccinia Virus protein VP39"/>
    <property type="match status" value="1"/>
</dbReference>
<dbReference type="HAMAP" id="MF_01007">
    <property type="entry name" value="16SrRNA_methyltr_H"/>
    <property type="match status" value="1"/>
</dbReference>
<dbReference type="InterPro" id="IPR002903">
    <property type="entry name" value="RsmH"/>
</dbReference>
<dbReference type="InterPro" id="IPR023397">
    <property type="entry name" value="SAM-dep_MeTrfase_MraW_recog"/>
</dbReference>
<dbReference type="InterPro" id="IPR029063">
    <property type="entry name" value="SAM-dependent_MTases_sf"/>
</dbReference>
<dbReference type="NCBIfam" id="TIGR00006">
    <property type="entry name" value="16S rRNA (cytosine(1402)-N(4))-methyltransferase RsmH"/>
    <property type="match status" value="1"/>
</dbReference>
<dbReference type="PANTHER" id="PTHR11265:SF0">
    <property type="entry name" value="12S RRNA N4-METHYLCYTIDINE METHYLTRANSFERASE"/>
    <property type="match status" value="1"/>
</dbReference>
<dbReference type="PANTHER" id="PTHR11265">
    <property type="entry name" value="S-ADENOSYL-METHYLTRANSFERASE MRAW"/>
    <property type="match status" value="1"/>
</dbReference>
<dbReference type="Pfam" id="PF01795">
    <property type="entry name" value="Methyltransf_5"/>
    <property type="match status" value="1"/>
</dbReference>
<dbReference type="PIRSF" id="PIRSF004486">
    <property type="entry name" value="MraW"/>
    <property type="match status" value="1"/>
</dbReference>
<dbReference type="SUPFAM" id="SSF81799">
    <property type="entry name" value="Putative methyltransferase TM0872, insert domain"/>
    <property type="match status" value="1"/>
</dbReference>
<dbReference type="SUPFAM" id="SSF53335">
    <property type="entry name" value="S-adenosyl-L-methionine-dependent methyltransferases"/>
    <property type="match status" value="1"/>
</dbReference>
<protein>
    <recommendedName>
        <fullName evidence="1">Ribosomal RNA small subunit methyltransferase H</fullName>
        <ecNumber evidence="1">2.1.1.199</ecNumber>
    </recommendedName>
    <alternativeName>
        <fullName evidence="1">16S rRNA m(4)C1402 methyltransferase</fullName>
    </alternativeName>
    <alternativeName>
        <fullName evidence="1">rRNA (cytosine-N(4)-)-methyltransferase RsmH</fullName>
    </alternativeName>
</protein>